<gene>
    <name evidence="1" type="primary">rpl13</name>
    <name type="ordered locus">Msp_0866</name>
</gene>
<sequence>MVTIIDGEGLVLGRLASTVSKRLLDGEEITIINAEKIIISGNKDFIYAKYKQRVDRASISNPRDLGPKYPRRPDDIFRRTVRGMIPYRKAHGRAAYKNLKVNVGIPKELEGQEVVEVEQAQPKNITKSMELGTVSKLLGAKF</sequence>
<comment type="function">
    <text evidence="1">This protein is one of the early assembly proteins of the 50S ribosomal subunit, although it is not seen to bind rRNA by itself. It is important during the early stages of 50S assembly.</text>
</comment>
<comment type="subunit">
    <text evidence="1">Part of the 50S ribosomal subunit.</text>
</comment>
<comment type="similarity">
    <text evidence="1">Belongs to the universal ribosomal protein uL13 family.</text>
</comment>
<reference key="1">
    <citation type="journal article" date="2006" name="J. Bacteriol.">
        <title>The genome sequence of Methanosphaera stadtmanae reveals why this human intestinal archaeon is restricted to methanol and H2 for methane formation and ATP synthesis.</title>
        <authorList>
            <person name="Fricke W.F."/>
            <person name="Seedorf H."/>
            <person name="Henne A."/>
            <person name="Kruer M."/>
            <person name="Liesegang H."/>
            <person name="Hedderich R."/>
            <person name="Gottschalk G."/>
            <person name="Thauer R.K."/>
        </authorList>
    </citation>
    <scope>NUCLEOTIDE SEQUENCE [LARGE SCALE GENOMIC DNA]</scope>
    <source>
        <strain>ATCC 43021 / DSM 3091 / JCM 11832 / MCB-3</strain>
    </source>
</reference>
<name>RL13_METST</name>
<keyword id="KW-1185">Reference proteome</keyword>
<keyword id="KW-0687">Ribonucleoprotein</keyword>
<keyword id="KW-0689">Ribosomal protein</keyword>
<dbReference type="EMBL" id="CP000102">
    <property type="protein sequence ID" value="ABC57255.1"/>
    <property type="molecule type" value="Genomic_DNA"/>
</dbReference>
<dbReference type="RefSeq" id="WP_011406454.1">
    <property type="nucleotide sequence ID" value="NC_007681.1"/>
</dbReference>
<dbReference type="SMR" id="Q2NFZ8"/>
<dbReference type="STRING" id="339860.Msp_0866"/>
<dbReference type="KEGG" id="mst:Msp_0866"/>
<dbReference type="eggNOG" id="arCOG04242">
    <property type="taxonomic scope" value="Archaea"/>
</dbReference>
<dbReference type="HOGENOM" id="CLU_076922_1_0_2"/>
<dbReference type="OrthoDB" id="7668at2157"/>
<dbReference type="Proteomes" id="UP000001931">
    <property type="component" value="Chromosome"/>
</dbReference>
<dbReference type="GO" id="GO:0022625">
    <property type="term" value="C:cytosolic large ribosomal subunit"/>
    <property type="evidence" value="ECO:0007669"/>
    <property type="project" value="TreeGrafter"/>
</dbReference>
<dbReference type="GO" id="GO:0003729">
    <property type="term" value="F:mRNA binding"/>
    <property type="evidence" value="ECO:0007669"/>
    <property type="project" value="TreeGrafter"/>
</dbReference>
<dbReference type="GO" id="GO:0003735">
    <property type="term" value="F:structural constituent of ribosome"/>
    <property type="evidence" value="ECO:0007669"/>
    <property type="project" value="InterPro"/>
</dbReference>
<dbReference type="GO" id="GO:0017148">
    <property type="term" value="P:negative regulation of translation"/>
    <property type="evidence" value="ECO:0007669"/>
    <property type="project" value="TreeGrafter"/>
</dbReference>
<dbReference type="GO" id="GO:0006412">
    <property type="term" value="P:translation"/>
    <property type="evidence" value="ECO:0007669"/>
    <property type="project" value="UniProtKB-UniRule"/>
</dbReference>
<dbReference type="CDD" id="cd00392">
    <property type="entry name" value="Ribosomal_L13"/>
    <property type="match status" value="1"/>
</dbReference>
<dbReference type="Gene3D" id="3.90.1180.10">
    <property type="entry name" value="Ribosomal protein L13"/>
    <property type="match status" value="1"/>
</dbReference>
<dbReference type="HAMAP" id="MF_01366">
    <property type="entry name" value="Ribosomal_uL13"/>
    <property type="match status" value="1"/>
</dbReference>
<dbReference type="InterPro" id="IPR005822">
    <property type="entry name" value="Ribosomal_uL13"/>
</dbReference>
<dbReference type="InterPro" id="IPR005823">
    <property type="entry name" value="Ribosomal_uL13_bac-type"/>
</dbReference>
<dbReference type="InterPro" id="IPR005755">
    <property type="entry name" value="Ribosomal_uL13_euk/arc"/>
</dbReference>
<dbReference type="InterPro" id="IPR036899">
    <property type="entry name" value="Ribosomal_uL13_sf"/>
</dbReference>
<dbReference type="NCBIfam" id="TIGR01077">
    <property type="entry name" value="L13_A_E"/>
    <property type="match status" value="1"/>
</dbReference>
<dbReference type="NCBIfam" id="NF005004">
    <property type="entry name" value="PRK06394.1"/>
    <property type="match status" value="1"/>
</dbReference>
<dbReference type="PANTHER" id="PTHR11545:SF3">
    <property type="entry name" value="LARGE RIBOSOMAL SUBUNIT PROTEIN UL13"/>
    <property type="match status" value="1"/>
</dbReference>
<dbReference type="PANTHER" id="PTHR11545">
    <property type="entry name" value="RIBOSOMAL PROTEIN L13"/>
    <property type="match status" value="1"/>
</dbReference>
<dbReference type="Pfam" id="PF00572">
    <property type="entry name" value="Ribosomal_L13"/>
    <property type="match status" value="1"/>
</dbReference>
<dbReference type="PIRSF" id="PIRSF002181">
    <property type="entry name" value="Ribosomal_L13"/>
    <property type="match status" value="1"/>
</dbReference>
<dbReference type="SUPFAM" id="SSF52161">
    <property type="entry name" value="Ribosomal protein L13"/>
    <property type="match status" value="1"/>
</dbReference>
<proteinExistence type="inferred from homology"/>
<protein>
    <recommendedName>
        <fullName evidence="1">Large ribosomal subunit protein uL13</fullName>
    </recommendedName>
    <alternativeName>
        <fullName evidence="2">50S ribosomal protein L13</fullName>
    </alternativeName>
</protein>
<accession>Q2NFZ8</accession>
<feature type="chain" id="PRO_0000261843" description="Large ribosomal subunit protein uL13">
    <location>
        <begin position="1"/>
        <end position="142"/>
    </location>
</feature>
<evidence type="ECO:0000255" key="1">
    <source>
        <dbReference type="HAMAP-Rule" id="MF_01366"/>
    </source>
</evidence>
<evidence type="ECO:0000305" key="2"/>
<organism>
    <name type="scientific">Methanosphaera stadtmanae (strain ATCC 43021 / DSM 3091 / JCM 11832 / MCB-3)</name>
    <dbReference type="NCBI Taxonomy" id="339860"/>
    <lineage>
        <taxon>Archaea</taxon>
        <taxon>Methanobacteriati</taxon>
        <taxon>Methanobacteriota</taxon>
        <taxon>Methanomada group</taxon>
        <taxon>Methanobacteria</taxon>
        <taxon>Methanobacteriales</taxon>
        <taxon>Methanobacteriaceae</taxon>
        <taxon>Methanosphaera</taxon>
    </lineage>
</organism>